<protein>
    <recommendedName>
        <fullName evidence="1">GTPase Era</fullName>
    </recommendedName>
</protein>
<name>ERA_NITEC</name>
<organism>
    <name type="scientific">Nitrosomonas eutropha (strain DSM 101675 / C91 / Nm57)</name>
    <dbReference type="NCBI Taxonomy" id="335283"/>
    <lineage>
        <taxon>Bacteria</taxon>
        <taxon>Pseudomonadati</taxon>
        <taxon>Pseudomonadota</taxon>
        <taxon>Betaproteobacteria</taxon>
        <taxon>Nitrosomonadales</taxon>
        <taxon>Nitrosomonadaceae</taxon>
        <taxon>Nitrosomonas</taxon>
    </lineage>
</organism>
<evidence type="ECO:0000255" key="1">
    <source>
        <dbReference type="HAMAP-Rule" id="MF_00367"/>
    </source>
</evidence>
<evidence type="ECO:0000255" key="2">
    <source>
        <dbReference type="PROSITE-ProRule" id="PRU01050"/>
    </source>
</evidence>
<keyword id="KW-0997">Cell inner membrane</keyword>
<keyword id="KW-1003">Cell membrane</keyword>
<keyword id="KW-0963">Cytoplasm</keyword>
<keyword id="KW-0342">GTP-binding</keyword>
<keyword id="KW-0472">Membrane</keyword>
<keyword id="KW-0547">Nucleotide-binding</keyword>
<keyword id="KW-0690">Ribosome biogenesis</keyword>
<keyword id="KW-0694">RNA-binding</keyword>
<keyword id="KW-0699">rRNA-binding</keyword>
<feature type="chain" id="PRO_1000121341" description="GTPase Era">
    <location>
        <begin position="1"/>
        <end position="296"/>
    </location>
</feature>
<feature type="domain" description="Era-type G" evidence="2">
    <location>
        <begin position="7"/>
        <end position="174"/>
    </location>
</feature>
<feature type="domain" description="KH type-2" evidence="1">
    <location>
        <begin position="205"/>
        <end position="281"/>
    </location>
</feature>
<feature type="region of interest" description="G1" evidence="2">
    <location>
        <begin position="15"/>
        <end position="22"/>
    </location>
</feature>
<feature type="region of interest" description="G2" evidence="2">
    <location>
        <begin position="41"/>
        <end position="45"/>
    </location>
</feature>
<feature type="region of interest" description="G3" evidence="2">
    <location>
        <begin position="62"/>
        <end position="65"/>
    </location>
</feature>
<feature type="region of interest" description="G4" evidence="2">
    <location>
        <begin position="123"/>
        <end position="126"/>
    </location>
</feature>
<feature type="region of interest" description="G5" evidence="2">
    <location>
        <begin position="153"/>
        <end position="155"/>
    </location>
</feature>
<feature type="binding site" evidence="1">
    <location>
        <begin position="15"/>
        <end position="22"/>
    </location>
    <ligand>
        <name>GTP</name>
        <dbReference type="ChEBI" id="CHEBI:37565"/>
    </ligand>
</feature>
<feature type="binding site" evidence="1">
    <location>
        <begin position="62"/>
        <end position="66"/>
    </location>
    <ligand>
        <name>GTP</name>
        <dbReference type="ChEBI" id="CHEBI:37565"/>
    </ligand>
</feature>
<feature type="binding site" evidence="1">
    <location>
        <begin position="123"/>
        <end position="126"/>
    </location>
    <ligand>
        <name>GTP</name>
        <dbReference type="ChEBI" id="CHEBI:37565"/>
    </ligand>
</feature>
<reference key="1">
    <citation type="journal article" date="2007" name="Environ. Microbiol.">
        <title>Whole-genome analysis of the ammonia-oxidizing bacterium, Nitrosomonas eutropha C91: implications for niche adaptation.</title>
        <authorList>
            <person name="Stein L.Y."/>
            <person name="Arp D.J."/>
            <person name="Berube P.M."/>
            <person name="Chain P.S."/>
            <person name="Hauser L."/>
            <person name="Jetten M.S."/>
            <person name="Klotz M.G."/>
            <person name="Larimer F.W."/>
            <person name="Norton J.M."/>
            <person name="Op den Camp H.J.M."/>
            <person name="Shin M."/>
            <person name="Wei X."/>
        </authorList>
    </citation>
    <scope>NUCLEOTIDE SEQUENCE [LARGE SCALE GENOMIC DNA]</scope>
    <source>
        <strain>DSM 101675 / C91 / Nm57</strain>
    </source>
</reference>
<accession>Q0AF71</accession>
<comment type="function">
    <text evidence="1">An essential GTPase that binds both GDP and GTP, with rapid nucleotide exchange. Plays a role in 16S rRNA processing and 30S ribosomal subunit biogenesis and possibly also in cell cycle regulation and energy metabolism.</text>
</comment>
<comment type="subunit">
    <text evidence="1">Monomer.</text>
</comment>
<comment type="subcellular location">
    <subcellularLocation>
        <location>Cytoplasm</location>
    </subcellularLocation>
    <subcellularLocation>
        <location evidence="1">Cell inner membrane</location>
        <topology evidence="1">Peripheral membrane protein</topology>
    </subcellularLocation>
</comment>
<comment type="similarity">
    <text evidence="1 2">Belongs to the TRAFAC class TrmE-Era-EngA-EngB-Septin-like GTPase superfamily. Era GTPase family.</text>
</comment>
<sequence length="296" mass="33856">MSASGYKAGYISIVGRPNVGKSTLLNHLIKQKISITSRKAQTTRHRIHGILTDVQSQFIFVDTPGFQMRHRSQLNQVMNRVVLQSMQDVDVILFVLEAGRFGREDEQVLEQLPRNLPVILVINKIDLLPDKLQLLPFMQKMADLFDFADIVPVSALQNRQLSDLTEVIRHYLPENPPVFTEDEITDRSERFLAAELLREKVFRQIGEEVPYSVSVIIEQFAVEGNLRRIHACILVERENQKAIIIGKQGKKLKDMATQARKDMEVLFDGKVYLEIWVKVKSGWADDAIALKSMGYE</sequence>
<proteinExistence type="inferred from homology"/>
<gene>
    <name evidence="1" type="primary">era</name>
    <name type="ordered locus">Neut_1777</name>
</gene>
<dbReference type="EMBL" id="CP000450">
    <property type="protein sequence ID" value="ABI60011.1"/>
    <property type="molecule type" value="Genomic_DNA"/>
</dbReference>
<dbReference type="RefSeq" id="WP_011634817.1">
    <property type="nucleotide sequence ID" value="NC_008344.1"/>
</dbReference>
<dbReference type="SMR" id="Q0AF71"/>
<dbReference type="STRING" id="335283.Neut_1777"/>
<dbReference type="KEGG" id="net:Neut_1777"/>
<dbReference type="eggNOG" id="COG1159">
    <property type="taxonomic scope" value="Bacteria"/>
</dbReference>
<dbReference type="HOGENOM" id="CLU_038009_1_2_4"/>
<dbReference type="OrthoDB" id="9805918at2"/>
<dbReference type="Proteomes" id="UP000001966">
    <property type="component" value="Chromosome"/>
</dbReference>
<dbReference type="GO" id="GO:0005829">
    <property type="term" value="C:cytosol"/>
    <property type="evidence" value="ECO:0007669"/>
    <property type="project" value="TreeGrafter"/>
</dbReference>
<dbReference type="GO" id="GO:0005886">
    <property type="term" value="C:plasma membrane"/>
    <property type="evidence" value="ECO:0007669"/>
    <property type="project" value="UniProtKB-SubCell"/>
</dbReference>
<dbReference type="GO" id="GO:0005525">
    <property type="term" value="F:GTP binding"/>
    <property type="evidence" value="ECO:0007669"/>
    <property type="project" value="UniProtKB-UniRule"/>
</dbReference>
<dbReference type="GO" id="GO:0003924">
    <property type="term" value="F:GTPase activity"/>
    <property type="evidence" value="ECO:0007669"/>
    <property type="project" value="UniProtKB-UniRule"/>
</dbReference>
<dbReference type="GO" id="GO:0043024">
    <property type="term" value="F:ribosomal small subunit binding"/>
    <property type="evidence" value="ECO:0007669"/>
    <property type="project" value="TreeGrafter"/>
</dbReference>
<dbReference type="GO" id="GO:0070181">
    <property type="term" value="F:small ribosomal subunit rRNA binding"/>
    <property type="evidence" value="ECO:0007669"/>
    <property type="project" value="UniProtKB-UniRule"/>
</dbReference>
<dbReference type="GO" id="GO:0000028">
    <property type="term" value="P:ribosomal small subunit assembly"/>
    <property type="evidence" value="ECO:0007669"/>
    <property type="project" value="TreeGrafter"/>
</dbReference>
<dbReference type="CDD" id="cd04163">
    <property type="entry name" value="Era"/>
    <property type="match status" value="1"/>
</dbReference>
<dbReference type="CDD" id="cd22534">
    <property type="entry name" value="KH-II_Era"/>
    <property type="match status" value="1"/>
</dbReference>
<dbReference type="FunFam" id="3.30.300.20:FF:000003">
    <property type="entry name" value="GTPase Era"/>
    <property type="match status" value="1"/>
</dbReference>
<dbReference type="FunFam" id="3.40.50.300:FF:000094">
    <property type="entry name" value="GTPase Era"/>
    <property type="match status" value="1"/>
</dbReference>
<dbReference type="Gene3D" id="3.30.300.20">
    <property type="match status" value="1"/>
</dbReference>
<dbReference type="Gene3D" id="3.40.50.300">
    <property type="entry name" value="P-loop containing nucleotide triphosphate hydrolases"/>
    <property type="match status" value="1"/>
</dbReference>
<dbReference type="HAMAP" id="MF_00367">
    <property type="entry name" value="GTPase_Era"/>
    <property type="match status" value="1"/>
</dbReference>
<dbReference type="InterPro" id="IPR030388">
    <property type="entry name" value="G_ERA_dom"/>
</dbReference>
<dbReference type="InterPro" id="IPR006073">
    <property type="entry name" value="GTP-bd"/>
</dbReference>
<dbReference type="InterPro" id="IPR005662">
    <property type="entry name" value="GTPase_Era-like"/>
</dbReference>
<dbReference type="InterPro" id="IPR015946">
    <property type="entry name" value="KH_dom-like_a/b"/>
</dbReference>
<dbReference type="InterPro" id="IPR004044">
    <property type="entry name" value="KH_dom_type_2"/>
</dbReference>
<dbReference type="InterPro" id="IPR009019">
    <property type="entry name" value="KH_sf_prok-type"/>
</dbReference>
<dbReference type="InterPro" id="IPR027417">
    <property type="entry name" value="P-loop_NTPase"/>
</dbReference>
<dbReference type="InterPro" id="IPR005225">
    <property type="entry name" value="Small_GTP-bd"/>
</dbReference>
<dbReference type="NCBIfam" id="TIGR00436">
    <property type="entry name" value="era"/>
    <property type="match status" value="1"/>
</dbReference>
<dbReference type="NCBIfam" id="NF000908">
    <property type="entry name" value="PRK00089.1"/>
    <property type="match status" value="1"/>
</dbReference>
<dbReference type="NCBIfam" id="TIGR00231">
    <property type="entry name" value="small_GTP"/>
    <property type="match status" value="1"/>
</dbReference>
<dbReference type="PANTHER" id="PTHR42698">
    <property type="entry name" value="GTPASE ERA"/>
    <property type="match status" value="1"/>
</dbReference>
<dbReference type="PANTHER" id="PTHR42698:SF1">
    <property type="entry name" value="GTPASE ERA, MITOCHONDRIAL"/>
    <property type="match status" value="1"/>
</dbReference>
<dbReference type="Pfam" id="PF07650">
    <property type="entry name" value="KH_2"/>
    <property type="match status" value="1"/>
</dbReference>
<dbReference type="Pfam" id="PF01926">
    <property type="entry name" value="MMR_HSR1"/>
    <property type="match status" value="1"/>
</dbReference>
<dbReference type="PRINTS" id="PR00326">
    <property type="entry name" value="GTP1OBG"/>
</dbReference>
<dbReference type="SUPFAM" id="SSF52540">
    <property type="entry name" value="P-loop containing nucleoside triphosphate hydrolases"/>
    <property type="match status" value="1"/>
</dbReference>
<dbReference type="SUPFAM" id="SSF54814">
    <property type="entry name" value="Prokaryotic type KH domain (KH-domain type II)"/>
    <property type="match status" value="1"/>
</dbReference>
<dbReference type="PROSITE" id="PS51713">
    <property type="entry name" value="G_ERA"/>
    <property type="match status" value="1"/>
</dbReference>
<dbReference type="PROSITE" id="PS50823">
    <property type="entry name" value="KH_TYPE_2"/>
    <property type="match status" value="1"/>
</dbReference>